<protein>
    <recommendedName>
        <fullName>Chondrolectin</fullName>
    </recommendedName>
</protein>
<reference key="1">
    <citation type="journal article" date="2012" name="J. Neurosci.">
        <title>Chondrolectin mediates growth cone interactions of motor axons with an intermediate target.</title>
        <authorList>
            <person name="Zhong Z."/>
            <person name="Ohnmacht J."/>
            <person name="Reimer M.M."/>
            <person name="Bach I."/>
            <person name="Becker T."/>
            <person name="Becker C.G."/>
        </authorList>
    </citation>
    <scope>NUCLEOTIDE SEQUENCE [MRNA]</scope>
    <scope>FUNCTION</scope>
    <scope>TISSUE SPECIFICITY</scope>
    <scope>DEVELOPMENTAL STAGE</scope>
</reference>
<reference key="2">
    <citation type="journal article" date="2013" name="Nature">
        <title>The zebrafish reference genome sequence and its relationship to the human genome.</title>
        <authorList>
            <person name="Howe K."/>
            <person name="Clark M.D."/>
            <person name="Torroja C.F."/>
            <person name="Torrance J."/>
            <person name="Berthelot C."/>
            <person name="Muffato M."/>
            <person name="Collins J.E."/>
            <person name="Humphray S."/>
            <person name="McLaren K."/>
            <person name="Matthews L."/>
            <person name="McLaren S."/>
            <person name="Sealy I."/>
            <person name="Caccamo M."/>
            <person name="Churcher C."/>
            <person name="Scott C."/>
            <person name="Barrett J.C."/>
            <person name="Koch R."/>
            <person name="Rauch G.J."/>
            <person name="White S."/>
            <person name="Chow W."/>
            <person name="Kilian B."/>
            <person name="Quintais L.T."/>
            <person name="Guerra-Assuncao J.A."/>
            <person name="Zhou Y."/>
            <person name="Gu Y."/>
            <person name="Yen J."/>
            <person name="Vogel J.H."/>
            <person name="Eyre T."/>
            <person name="Redmond S."/>
            <person name="Banerjee R."/>
            <person name="Chi J."/>
            <person name="Fu B."/>
            <person name="Langley E."/>
            <person name="Maguire S.F."/>
            <person name="Laird G.K."/>
            <person name="Lloyd D."/>
            <person name="Kenyon E."/>
            <person name="Donaldson S."/>
            <person name="Sehra H."/>
            <person name="Almeida-King J."/>
            <person name="Loveland J."/>
            <person name="Trevanion S."/>
            <person name="Jones M."/>
            <person name="Quail M."/>
            <person name="Willey D."/>
            <person name="Hunt A."/>
            <person name="Burton J."/>
            <person name="Sims S."/>
            <person name="McLay K."/>
            <person name="Plumb B."/>
            <person name="Davis J."/>
            <person name="Clee C."/>
            <person name="Oliver K."/>
            <person name="Clark R."/>
            <person name="Riddle C."/>
            <person name="Elliot D."/>
            <person name="Threadgold G."/>
            <person name="Harden G."/>
            <person name="Ware D."/>
            <person name="Begum S."/>
            <person name="Mortimore B."/>
            <person name="Kerry G."/>
            <person name="Heath P."/>
            <person name="Phillimore B."/>
            <person name="Tracey A."/>
            <person name="Corby N."/>
            <person name="Dunn M."/>
            <person name="Johnson C."/>
            <person name="Wood J."/>
            <person name="Clark S."/>
            <person name="Pelan S."/>
            <person name="Griffiths G."/>
            <person name="Smith M."/>
            <person name="Glithero R."/>
            <person name="Howden P."/>
            <person name="Barker N."/>
            <person name="Lloyd C."/>
            <person name="Stevens C."/>
            <person name="Harley J."/>
            <person name="Holt K."/>
            <person name="Panagiotidis G."/>
            <person name="Lovell J."/>
            <person name="Beasley H."/>
            <person name="Henderson C."/>
            <person name="Gordon D."/>
            <person name="Auger K."/>
            <person name="Wright D."/>
            <person name="Collins J."/>
            <person name="Raisen C."/>
            <person name="Dyer L."/>
            <person name="Leung K."/>
            <person name="Robertson L."/>
            <person name="Ambridge K."/>
            <person name="Leongamornlert D."/>
            <person name="McGuire S."/>
            <person name="Gilderthorp R."/>
            <person name="Griffiths C."/>
            <person name="Manthravadi D."/>
            <person name="Nichol S."/>
            <person name="Barker G."/>
            <person name="Whitehead S."/>
            <person name="Kay M."/>
            <person name="Brown J."/>
            <person name="Murnane C."/>
            <person name="Gray E."/>
            <person name="Humphries M."/>
            <person name="Sycamore N."/>
            <person name="Barker D."/>
            <person name="Saunders D."/>
            <person name="Wallis J."/>
            <person name="Babbage A."/>
            <person name="Hammond S."/>
            <person name="Mashreghi-Mohammadi M."/>
            <person name="Barr L."/>
            <person name="Martin S."/>
            <person name="Wray P."/>
            <person name="Ellington A."/>
            <person name="Matthews N."/>
            <person name="Ellwood M."/>
            <person name="Woodmansey R."/>
            <person name="Clark G."/>
            <person name="Cooper J."/>
            <person name="Tromans A."/>
            <person name="Grafham D."/>
            <person name="Skuce C."/>
            <person name="Pandian R."/>
            <person name="Andrews R."/>
            <person name="Harrison E."/>
            <person name="Kimberley A."/>
            <person name="Garnett J."/>
            <person name="Fosker N."/>
            <person name="Hall R."/>
            <person name="Garner P."/>
            <person name="Kelly D."/>
            <person name="Bird C."/>
            <person name="Palmer S."/>
            <person name="Gehring I."/>
            <person name="Berger A."/>
            <person name="Dooley C.M."/>
            <person name="Ersan-Urun Z."/>
            <person name="Eser C."/>
            <person name="Geiger H."/>
            <person name="Geisler M."/>
            <person name="Karotki L."/>
            <person name="Kirn A."/>
            <person name="Konantz J."/>
            <person name="Konantz M."/>
            <person name="Oberlander M."/>
            <person name="Rudolph-Geiger S."/>
            <person name="Teucke M."/>
            <person name="Lanz C."/>
            <person name="Raddatz G."/>
            <person name="Osoegawa K."/>
            <person name="Zhu B."/>
            <person name="Rapp A."/>
            <person name="Widaa S."/>
            <person name="Langford C."/>
            <person name="Yang F."/>
            <person name="Schuster S.C."/>
            <person name="Carter N.P."/>
            <person name="Harrow J."/>
            <person name="Ning Z."/>
            <person name="Herrero J."/>
            <person name="Searle S.M."/>
            <person name="Enright A."/>
            <person name="Geisler R."/>
            <person name="Plasterk R.H."/>
            <person name="Lee C."/>
            <person name="Westerfield M."/>
            <person name="de Jong P.J."/>
            <person name="Zon L.I."/>
            <person name="Postlethwait J.H."/>
            <person name="Nusslein-Volhard C."/>
            <person name="Hubbard T.J."/>
            <person name="Roest Crollius H."/>
            <person name="Rogers J."/>
            <person name="Stemple D.L."/>
        </authorList>
    </citation>
    <scope>NUCLEOTIDE SEQUENCE [LARGE SCALE GENOMIC DNA]</scope>
    <source>
        <strain>Tuebingen</strain>
    </source>
</reference>
<reference key="3">
    <citation type="submission" date="2008-04" db="EMBL/GenBank/DDBJ databases">
        <authorList>
            <consortium name="NIH - Zebrafish Gene Collection (ZGC) project"/>
        </authorList>
    </citation>
    <scope>NUCLEOTIDE SEQUENCE [LARGE SCALE MRNA]</scope>
</reference>
<reference key="4">
    <citation type="journal article" date="2014" name="Hum. Mol. Genet.">
        <title>Chondrolectin affects cell survival and neuronal outgrowth in in vitro and in vivo models of spinal muscular atrophy.</title>
        <authorList>
            <person name="Sleigh J.N."/>
            <person name="Barreiro-Iglesias A."/>
            <person name="Oliver P.L."/>
            <person name="Biba A."/>
            <person name="Becker T."/>
            <person name="Davies K.E."/>
            <person name="Becker C.G."/>
            <person name="Talbot K."/>
        </authorList>
    </citation>
    <scope>POSSIBLE INVOLVEMENT IN SMA</scope>
</reference>
<accession>Q568T5</accession>
<comment type="function">
    <text evidence="4">Plays a role in the development of the nervous system such as in neurite outgrowth and elongation. Involved in motor axon growth and guidance. Required for correct interactions of motor axons with the horizontal myoseptum.</text>
</comment>
<comment type="subcellular location">
    <subcellularLocation>
        <location evidence="6">Membrane</location>
        <topology evidence="6">Single-pass type I membrane protein</topology>
    </subcellularLocation>
</comment>
<comment type="tissue specificity">
    <text evidence="4">Expressed in developing motor neurons.</text>
</comment>
<comment type="developmental stage">
    <text evidence="4">Expressed in primary motor neurons from early stages of their differentiation (12 hpf) to at least 24 hpf.</text>
</comment>
<comment type="miscellaneous">
    <text evidence="5">Overexpression partially rescues the motor axon defects upon Smn-depleted.</text>
</comment>
<proteinExistence type="evidence at transcript level"/>
<feature type="signal peptide" evidence="1">
    <location>
        <begin position="1"/>
        <end position="20"/>
    </location>
</feature>
<feature type="chain" id="PRO_5009711686" description="Chondrolectin">
    <location>
        <begin position="21"/>
        <end position="296"/>
    </location>
</feature>
<feature type="topological domain" description="Extracellular" evidence="1">
    <location>
        <begin position="21"/>
        <end position="238"/>
    </location>
</feature>
<feature type="transmembrane region" description="Helical" evidence="1">
    <location>
        <begin position="239"/>
        <end position="266"/>
    </location>
</feature>
<feature type="topological domain" description="Cytoplasmic" evidence="1">
    <location>
        <begin position="267"/>
        <end position="296"/>
    </location>
</feature>
<feature type="domain" description="C-type lectin" evidence="2">
    <location>
        <begin position="38"/>
        <end position="187"/>
    </location>
</feature>
<feature type="region of interest" description="Disordered" evidence="3">
    <location>
        <begin position="197"/>
        <end position="229"/>
    </location>
</feature>
<feature type="compositionally biased region" description="Basic and acidic residues" evidence="3">
    <location>
        <begin position="197"/>
        <end position="221"/>
    </location>
</feature>
<evidence type="ECO:0000255" key="1"/>
<evidence type="ECO:0000255" key="2">
    <source>
        <dbReference type="PROSITE-ProRule" id="PRU00040"/>
    </source>
</evidence>
<evidence type="ECO:0000256" key="3">
    <source>
        <dbReference type="SAM" id="MobiDB-lite"/>
    </source>
</evidence>
<evidence type="ECO:0000269" key="4">
    <source>
    </source>
</evidence>
<evidence type="ECO:0000269" key="5">
    <source>
    </source>
</evidence>
<evidence type="ECO:0000305" key="6"/>
<organism>
    <name type="scientific">Danio rerio</name>
    <name type="common">Zebrafish</name>
    <name type="synonym">Brachydanio rerio</name>
    <dbReference type="NCBI Taxonomy" id="7955"/>
    <lineage>
        <taxon>Eukaryota</taxon>
        <taxon>Metazoa</taxon>
        <taxon>Chordata</taxon>
        <taxon>Craniata</taxon>
        <taxon>Vertebrata</taxon>
        <taxon>Euteleostomi</taxon>
        <taxon>Actinopterygii</taxon>
        <taxon>Neopterygii</taxon>
        <taxon>Teleostei</taxon>
        <taxon>Ostariophysi</taxon>
        <taxon>Cypriniformes</taxon>
        <taxon>Danionidae</taxon>
        <taxon>Danioninae</taxon>
        <taxon>Danio</taxon>
    </lineage>
</organism>
<sequence length="296" mass="32715">MRATLRILCALTFLVSCSRGARVVSGQTVCQGNPEHPCYKIAYFKDVSSRVAFWEALQACEMDGGSLLSIENTAEQKHIEHLLRELSVSSSTGPASITDGDFWIGLTREEGDNAQEPGAFASCPNLYRWTDGSVSLFRNWYADEPSCGGEACVVMYHQPTALAGPGGPYLYQWNDDRCNMKHNFICKYEPESHLVKVQSDRPGGHDVDLSTEDKEDRRTPPTDEDESPRLIIAGPSSMLLIYVIIPTIPLLLLILVASGTCCFQMLSKSKPRTKTSVNQSTLWISKTPKIDSGMEV</sequence>
<keyword id="KW-0430">Lectin</keyword>
<keyword id="KW-0472">Membrane</keyword>
<keyword id="KW-0524">Neurogenesis</keyword>
<keyword id="KW-1185">Reference proteome</keyword>
<keyword id="KW-0732">Signal</keyword>
<keyword id="KW-0812">Transmembrane</keyword>
<keyword id="KW-1133">Transmembrane helix</keyword>
<name>CHODL_DANRE</name>
<gene>
    <name type="primary">chodl</name>
    <name type="synonym">zgc:110088</name>
</gene>
<dbReference type="EMBL" id="JQ790525">
    <property type="protein sequence ID" value="AFI44996.1"/>
    <property type="molecule type" value="mRNA"/>
</dbReference>
<dbReference type="EMBL" id="CT574587">
    <property type="status" value="NOT_ANNOTATED_CDS"/>
    <property type="molecule type" value="Genomic_DNA"/>
</dbReference>
<dbReference type="EMBL" id="BC092727">
    <property type="protein sequence ID" value="AAH92727.1"/>
    <property type="molecule type" value="mRNA"/>
</dbReference>
<dbReference type="EMBL" id="BC164239">
    <property type="protein sequence ID" value="AAI64239.1"/>
    <property type="molecule type" value="mRNA"/>
</dbReference>
<dbReference type="RefSeq" id="NP_001017578.1">
    <property type="nucleotide sequence ID" value="NM_001017578.2"/>
</dbReference>
<dbReference type="SMR" id="Q568T5"/>
<dbReference type="FunCoup" id="Q568T5">
    <property type="interactions" value="981"/>
</dbReference>
<dbReference type="STRING" id="7955.ENSDARP00000041334"/>
<dbReference type="PaxDb" id="7955-ENSDARP00000041334"/>
<dbReference type="Ensembl" id="ENSDART00000041335">
    <property type="protein sequence ID" value="ENSDARP00000041334"/>
    <property type="gene ID" value="ENSDARG00000034528"/>
</dbReference>
<dbReference type="Ensembl" id="ENSDART00000185345">
    <property type="protein sequence ID" value="ENSDARP00000153783"/>
    <property type="gene ID" value="ENSDARG00000109583"/>
</dbReference>
<dbReference type="Ensembl" id="ENSDART00000186280">
    <property type="protein sequence ID" value="ENSDARP00000151337"/>
    <property type="gene ID" value="ENSDARG00000111154"/>
</dbReference>
<dbReference type="GeneID" id="550240"/>
<dbReference type="KEGG" id="dre:550240"/>
<dbReference type="AGR" id="ZFIN:ZDB-GENE-050417-36"/>
<dbReference type="CTD" id="140578"/>
<dbReference type="ZFIN" id="ZDB-GENE-050417-36">
    <property type="gene designation" value="chodl"/>
</dbReference>
<dbReference type="eggNOG" id="KOG4297">
    <property type="taxonomic scope" value="Eukaryota"/>
</dbReference>
<dbReference type="HOGENOM" id="CLU_045492_1_0_1"/>
<dbReference type="InParanoid" id="Q568T5"/>
<dbReference type="OMA" id="ICKYASE"/>
<dbReference type="OrthoDB" id="5797898at2759"/>
<dbReference type="PhylomeDB" id="Q568T5"/>
<dbReference type="TreeFam" id="TF330715"/>
<dbReference type="PRO" id="PR:Q568T5"/>
<dbReference type="Proteomes" id="UP000000437">
    <property type="component" value="Alternate scaffold 24"/>
</dbReference>
<dbReference type="Proteomes" id="UP000000437">
    <property type="component" value="Chromosome 24"/>
</dbReference>
<dbReference type="Bgee" id="ENSDARG00000034528">
    <property type="expression patterns" value="Expressed in spleen and 8 other cell types or tissues"/>
</dbReference>
<dbReference type="GO" id="GO:0005737">
    <property type="term" value="C:cytoplasm"/>
    <property type="evidence" value="ECO:0000318"/>
    <property type="project" value="GO_Central"/>
</dbReference>
<dbReference type="GO" id="GO:0016020">
    <property type="term" value="C:membrane"/>
    <property type="evidence" value="ECO:0007669"/>
    <property type="project" value="UniProtKB-SubCell"/>
</dbReference>
<dbReference type="GO" id="GO:0030246">
    <property type="term" value="F:carbohydrate binding"/>
    <property type="evidence" value="ECO:0007669"/>
    <property type="project" value="UniProtKB-KW"/>
</dbReference>
<dbReference type="GO" id="GO:0007409">
    <property type="term" value="P:axonogenesis"/>
    <property type="evidence" value="ECO:0000315"/>
    <property type="project" value="ZFIN"/>
</dbReference>
<dbReference type="GO" id="GO:0008045">
    <property type="term" value="P:motor neuron axon guidance"/>
    <property type="evidence" value="ECO:0000316"/>
    <property type="project" value="ZFIN"/>
</dbReference>
<dbReference type="GO" id="GO:0050772">
    <property type="term" value="P:positive regulation of axonogenesis"/>
    <property type="evidence" value="ECO:0000316"/>
    <property type="project" value="ZFIN"/>
</dbReference>
<dbReference type="FunFam" id="3.10.100.10:FF:000006">
    <property type="entry name" value="Layilin b"/>
    <property type="match status" value="1"/>
</dbReference>
<dbReference type="Gene3D" id="3.10.100.10">
    <property type="entry name" value="Mannose-Binding Protein A, subunit A"/>
    <property type="match status" value="1"/>
</dbReference>
<dbReference type="InterPro" id="IPR001304">
    <property type="entry name" value="C-type_lectin-like"/>
</dbReference>
<dbReference type="InterPro" id="IPR016186">
    <property type="entry name" value="C-type_lectin-like/link_sf"/>
</dbReference>
<dbReference type="InterPro" id="IPR051505">
    <property type="entry name" value="C-type_lectin_domain"/>
</dbReference>
<dbReference type="InterPro" id="IPR016187">
    <property type="entry name" value="CTDL_fold"/>
</dbReference>
<dbReference type="PANTHER" id="PTHR14789:SF1">
    <property type="entry name" value="CHONDROLECTIN"/>
    <property type="match status" value="1"/>
</dbReference>
<dbReference type="PANTHER" id="PTHR14789">
    <property type="entry name" value="CHONDROLECTIN VARIANT CHODLFDELTAE"/>
    <property type="match status" value="1"/>
</dbReference>
<dbReference type="Pfam" id="PF00059">
    <property type="entry name" value="Lectin_C"/>
    <property type="match status" value="1"/>
</dbReference>
<dbReference type="SMART" id="SM00034">
    <property type="entry name" value="CLECT"/>
    <property type="match status" value="1"/>
</dbReference>
<dbReference type="SUPFAM" id="SSF56436">
    <property type="entry name" value="C-type lectin-like"/>
    <property type="match status" value="1"/>
</dbReference>
<dbReference type="PROSITE" id="PS50041">
    <property type="entry name" value="C_TYPE_LECTIN_2"/>
    <property type="match status" value="1"/>
</dbReference>